<comment type="function">
    <text evidence="1">Hydrolyzes ADP-ribose 1'',2''-cyclic phosphate (Appr&gt;1) that is produced during tRNA splicing into ADP-ribose 1''-phosphate (Appr-1''p).</text>
</comment>
<comment type="similarity">
    <text>Belongs to the 2H phosphoesterase superfamily. CPD1 family.</text>
</comment>
<organism>
    <name type="scientific">Triticum aestivum</name>
    <name type="common">Wheat</name>
    <dbReference type="NCBI Taxonomy" id="4565"/>
    <lineage>
        <taxon>Eukaryota</taxon>
        <taxon>Viridiplantae</taxon>
        <taxon>Streptophyta</taxon>
        <taxon>Embryophyta</taxon>
        <taxon>Tracheophyta</taxon>
        <taxon>Spermatophyta</taxon>
        <taxon>Magnoliopsida</taxon>
        <taxon>Liliopsida</taxon>
        <taxon>Poales</taxon>
        <taxon>Poaceae</taxon>
        <taxon>BOP clade</taxon>
        <taxon>Pooideae</taxon>
        <taxon>Triticodae</taxon>
        <taxon>Triticeae</taxon>
        <taxon>Triticinae</taxon>
        <taxon>Triticum</taxon>
    </lineage>
</organism>
<proteinExistence type="evidence at protein level"/>
<name>CPD_WHEAT</name>
<accession>P62809</accession>
<keyword id="KW-0903">Direct protein sequencing</keyword>
<keyword id="KW-0378">Hydrolase</keyword>
<keyword id="KW-1185">Reference proteome</keyword>
<evidence type="ECO:0000250" key="1"/>
<evidence type="ECO:0000305" key="2"/>
<sequence>AAHGGPPFEPHATVVGAVAAAAAADVAPYTATTPYMPHVSLLYGDLTDEEK</sequence>
<dbReference type="EC" id="3.1.4.-"/>
<dbReference type="STRING" id="4565.P62809"/>
<dbReference type="PaxDb" id="4565-Traes_1DL_D504BBA5F.1"/>
<dbReference type="eggNOG" id="ENOG502QPX1">
    <property type="taxonomic scope" value="Eukaryota"/>
</dbReference>
<dbReference type="SABIO-RK" id="P62809"/>
<dbReference type="Proteomes" id="UP000019116">
    <property type="component" value="Unplaced"/>
</dbReference>
<dbReference type="GO" id="GO:0004112">
    <property type="term" value="F:cyclic-nucleotide phosphodiesterase activity"/>
    <property type="evidence" value="ECO:0007669"/>
    <property type="project" value="InterPro"/>
</dbReference>
<dbReference type="Gene3D" id="3.90.1140.10">
    <property type="entry name" value="Cyclic phosphodiesterase"/>
    <property type="match status" value="1"/>
</dbReference>
<dbReference type="InterPro" id="IPR012386">
    <property type="entry name" value="Cyclic-nucl_3Pdiesterase"/>
</dbReference>
<dbReference type="InterPro" id="IPR009097">
    <property type="entry name" value="Cyclic_Pdiesterase"/>
</dbReference>
<dbReference type="PANTHER" id="PTHR28141">
    <property type="entry name" value="2',3'-CYCLIC-NUCLEOTIDE 3'-PHOSPHODIESTERASE"/>
    <property type="match status" value="1"/>
</dbReference>
<dbReference type="PANTHER" id="PTHR28141:SF1">
    <property type="entry name" value="2',3'-CYCLIC-NUCLEOTIDE 3'-PHOSPHODIESTERASE"/>
    <property type="match status" value="1"/>
</dbReference>
<dbReference type="SUPFAM" id="SSF55144">
    <property type="entry name" value="LigT-like"/>
    <property type="match status" value="1"/>
</dbReference>
<feature type="chain" id="PRO_0000079286" description="Cyclic phosphodiesterase">
    <location>
        <begin position="1"/>
        <end position="51"/>
    </location>
</feature>
<feature type="active site" description="Proton donor/acceptor" evidence="1">
    <location>
        <position position="11"/>
    </location>
</feature>
<feature type="active site" description="Proton donor/acceptor" evidence="1">
    <location>
        <position position="38"/>
    </location>
</feature>
<feature type="binding site" evidence="1">
    <location>
        <position position="13"/>
    </location>
    <ligand>
        <name>substrate</name>
    </ligand>
</feature>
<feature type="binding site" evidence="1">
    <location>
        <position position="40"/>
    </location>
    <ligand>
        <name>substrate</name>
    </ligand>
</feature>
<feature type="binding site" evidence="1">
    <location>
        <position position="43"/>
    </location>
    <ligand>
        <name>substrate</name>
    </ligand>
</feature>
<feature type="unsure residue" description="T or S">
    <location>
        <position position="32"/>
    </location>
</feature>
<feature type="non-consecutive residues" evidence="2">
    <location>
        <begin position="18"/>
        <end position="19"/>
    </location>
</feature>
<feature type="non-consecutive residues" evidence="2">
    <location>
        <begin position="31"/>
        <end position="32"/>
    </location>
</feature>
<reference key="1">
    <citation type="journal article" date="1997" name="J. Biol. Chem.">
        <title>Cloning and characterization of the Arabidopsis cyclic phosphodiesterase which hydrolyzes ADP-ribose 1'',2''-cyclic phosphate and nucleoside 2',3'-cyclic phosphates.</title>
        <authorList>
            <person name="Genschik P."/>
            <person name="Hall J."/>
            <person name="Filipowicz W."/>
        </authorList>
    </citation>
    <scope>PROTEIN SEQUENCE</scope>
</reference>
<protein>
    <recommendedName>
        <fullName>Cyclic phosphodiesterase</fullName>
        <shortName>CPDase</shortName>
        <ecNumber>3.1.4.-</ecNumber>
    </recommendedName>
</protein>